<name>PALY1_PLEOS</name>
<protein>
    <recommendedName>
        <fullName evidence="4">Phenylalanine ammonia-lyase 1</fullName>
        <ecNumber evidence="3">4.3.1.24</ecNumber>
    </recommendedName>
    <alternativeName>
        <fullName evidence="4">PoPAL1</fullName>
    </alternativeName>
</protein>
<feature type="chain" id="PRO_0000454791" description="Phenylalanine ammonia-lyase 1">
    <location>
        <begin position="1"/>
        <end position="743"/>
    </location>
</feature>
<feature type="active site" description="Proton donor/acceptor" evidence="2">
    <location>
        <position position="120"/>
    </location>
</feature>
<feature type="binding site" evidence="2">
    <location>
        <position position="287"/>
    </location>
    <ligand>
        <name>(E)-cinnamate</name>
        <dbReference type="ChEBI" id="CHEBI:15669"/>
    </ligand>
</feature>
<feature type="binding site" evidence="2">
    <location>
        <position position="377"/>
    </location>
    <ligand>
        <name>(E)-cinnamate</name>
        <dbReference type="ChEBI" id="CHEBI:15669"/>
    </ligand>
</feature>
<feature type="binding site" evidence="2">
    <location>
        <position position="383"/>
    </location>
    <ligand>
        <name>(E)-cinnamate</name>
        <dbReference type="ChEBI" id="CHEBI:15669"/>
    </ligand>
</feature>
<feature type="binding site" evidence="2">
    <location>
        <position position="413"/>
    </location>
    <ligand>
        <name>(E)-cinnamate</name>
        <dbReference type="ChEBI" id="CHEBI:15669"/>
    </ligand>
</feature>
<feature type="binding site" evidence="1">
    <location>
        <position position="484"/>
    </location>
    <ligand>
        <name>(E)-cinnamate</name>
        <dbReference type="ChEBI" id="CHEBI:15669"/>
    </ligand>
</feature>
<feature type="binding site" evidence="1">
    <location>
        <position position="512"/>
    </location>
    <ligand>
        <name>(E)-cinnamate</name>
        <dbReference type="ChEBI" id="CHEBI:15669"/>
    </ligand>
</feature>
<feature type="binding site" evidence="2">
    <location>
        <position position="515"/>
    </location>
    <ligand>
        <name>(E)-cinnamate</name>
        <dbReference type="ChEBI" id="CHEBI:15669"/>
    </ligand>
</feature>
<feature type="modified residue" description="2,3-didehydroalanine (Ser)" evidence="2">
    <location>
        <position position="225"/>
    </location>
</feature>
<feature type="cross-link" description="5-imidazolinone (Ala-Gly)" evidence="2">
    <location>
        <begin position="224"/>
        <end position="226"/>
    </location>
</feature>
<organism evidence="6">
    <name type="scientific">Pleurotus ostreatus</name>
    <name type="common">Oyster mushroom</name>
    <name type="synonym">White-rot fungus</name>
    <dbReference type="NCBI Taxonomy" id="5322"/>
    <lineage>
        <taxon>Eukaryota</taxon>
        <taxon>Fungi</taxon>
        <taxon>Dikarya</taxon>
        <taxon>Basidiomycota</taxon>
        <taxon>Agaricomycotina</taxon>
        <taxon>Agaricomycetes</taxon>
        <taxon>Agaricomycetidae</taxon>
        <taxon>Agaricales</taxon>
        <taxon>Pleurotineae</taxon>
        <taxon>Pleurotaceae</taxon>
        <taxon>Pleurotus</taxon>
    </lineage>
</organism>
<evidence type="ECO:0000250" key="1">
    <source>
        <dbReference type="UniProtKB" id="P11544"/>
    </source>
</evidence>
<evidence type="ECO:0000250" key="2">
    <source>
        <dbReference type="UniProtKB" id="Q68G84"/>
    </source>
</evidence>
<evidence type="ECO:0000269" key="3">
    <source>
    </source>
</evidence>
<evidence type="ECO:0000303" key="4">
    <source>
    </source>
</evidence>
<evidence type="ECO:0000305" key="5"/>
<evidence type="ECO:0000312" key="6">
    <source>
        <dbReference type="EMBL" id="QDF60494.1"/>
    </source>
</evidence>
<gene>
    <name evidence="4" type="primary">PAL1</name>
</gene>
<dbReference type="EC" id="4.3.1.24" evidence="3"/>
<dbReference type="EMBL" id="MK207023">
    <property type="protein sequence ID" value="QDF60494.1"/>
    <property type="molecule type" value="mRNA"/>
</dbReference>
<dbReference type="SMR" id="A0A4Y6HUI7"/>
<dbReference type="VEuPathDB" id="FungiDB:PC9H_007942"/>
<dbReference type="VEuPathDB" id="FungiDB:PLEOSDRAFT_1112899"/>
<dbReference type="UniPathway" id="UPA00713">
    <property type="reaction ID" value="UER00725"/>
</dbReference>
<dbReference type="GO" id="GO:0005737">
    <property type="term" value="C:cytoplasm"/>
    <property type="evidence" value="ECO:0007669"/>
    <property type="project" value="UniProtKB-SubCell"/>
</dbReference>
<dbReference type="GO" id="GO:0045548">
    <property type="term" value="F:phenylalanine ammonia-lyase activity"/>
    <property type="evidence" value="ECO:0000314"/>
    <property type="project" value="UniProtKB"/>
</dbReference>
<dbReference type="GO" id="GO:0009800">
    <property type="term" value="P:cinnamic acid biosynthetic process"/>
    <property type="evidence" value="ECO:0000305"/>
    <property type="project" value="UniProtKB"/>
</dbReference>
<dbReference type="GO" id="GO:0006559">
    <property type="term" value="P:L-phenylalanine catabolic process"/>
    <property type="evidence" value="ECO:0007669"/>
    <property type="project" value="UniProtKB-KW"/>
</dbReference>
<dbReference type="CDD" id="cd00332">
    <property type="entry name" value="PAL-HAL"/>
    <property type="match status" value="1"/>
</dbReference>
<dbReference type="Gene3D" id="1.20.200.10">
    <property type="entry name" value="Fumarase/aspartase (Central domain)"/>
    <property type="match status" value="1"/>
</dbReference>
<dbReference type="Gene3D" id="1.10.275.10">
    <property type="entry name" value="Fumarase/aspartase (N-terminal domain)"/>
    <property type="match status" value="1"/>
</dbReference>
<dbReference type="Gene3D" id="1.10.274.20">
    <property type="entry name" value="Phenylalanine ammonia-lyase 1, domain 3"/>
    <property type="match status" value="1"/>
</dbReference>
<dbReference type="InterPro" id="IPR001106">
    <property type="entry name" value="Aromatic_Lyase"/>
</dbReference>
<dbReference type="InterPro" id="IPR024083">
    <property type="entry name" value="Fumarase/histidase_N"/>
</dbReference>
<dbReference type="InterPro" id="IPR008948">
    <property type="entry name" value="L-Aspartase-like"/>
</dbReference>
<dbReference type="InterPro" id="IPR022313">
    <property type="entry name" value="Phe/His_NH3-lyase_AS"/>
</dbReference>
<dbReference type="InterPro" id="IPR005922">
    <property type="entry name" value="Phe_NH3-lyase"/>
</dbReference>
<dbReference type="InterPro" id="IPR023144">
    <property type="entry name" value="Phe_NH3-lyase_shielding_dom_sf"/>
</dbReference>
<dbReference type="NCBIfam" id="TIGR01226">
    <property type="entry name" value="phe_am_lyase"/>
    <property type="match status" value="1"/>
</dbReference>
<dbReference type="PANTHER" id="PTHR10362">
    <property type="entry name" value="HISTIDINE AMMONIA-LYASE"/>
    <property type="match status" value="1"/>
</dbReference>
<dbReference type="Pfam" id="PF00221">
    <property type="entry name" value="Lyase_aromatic"/>
    <property type="match status" value="1"/>
</dbReference>
<dbReference type="SUPFAM" id="SSF48557">
    <property type="entry name" value="L-aspartase-like"/>
    <property type="match status" value="1"/>
</dbReference>
<dbReference type="PROSITE" id="PS00488">
    <property type="entry name" value="PAL_HISTIDASE"/>
    <property type="match status" value="1"/>
</dbReference>
<reference evidence="5" key="1">
    <citation type="journal article" date="2019" name="BMC Microbiol.">
        <title>Expression patterns of two pal genes of Pleurotus ostreatus across developmental stages and under heat stress.</title>
        <authorList>
            <person name="Hou L."/>
            <person name="Wang L."/>
            <person name="Wu X."/>
            <person name="Gao W."/>
            <person name="Zhang J."/>
            <person name="Huang C."/>
        </authorList>
    </citation>
    <scope>NUCLEOTIDE SEQUENCE [MRNA]</scope>
    <scope>FUNCTION</scope>
    <scope>CATALYTIC ACTIVITY</scope>
    <scope>DEVELOPMENTAL STAGE</scope>
    <scope>INDUCTION</scope>
    <scope>DISRUPTION PHENOTYPE</scope>
    <source>
        <strain evidence="4">CCMSSC00389</strain>
    </source>
</reference>
<sequence>MTILSADTLSITRPYSNSLSTLKVIATPVTESPPSPVASSISPNATNLVEEFINAHKELQSYKSGRPVVLDGHTLSIAAVAAAARYDAGVELDDSPLVKDRLLQSRQVVADKVEQGTSIYGVTTGFGGSADTRTDQPILLGNALMQMQHSGILPSSSKPLDALPLQDPFGLAMPESWVRGAMLIRMNSLIRGHSGVRWELIEKMNDLLRANITPVVPLRGSISASGDLQPLSYVAGALYGNPSIRVFDGERTSALGPRKIVSSVEALEAHSISPISLACKEHLGILNGTAFSASVAALALHDAVHLTLLTQVLTAMGAEALAGTRGNFDPFIHAVARPHPGQIETADVIWNLLEGSKFATTEEEEMTIDEDKGHLRQDRYPLRTSPQFIGPQVEDLIASLATITLECNSTTDNPLVDGETGKVHNGGNFQAMAVTNAMEKTRLSLHHLGKLVFSQCAELINPTMNRGLPPSLAATDPSLNYHAKGIDIASAAYVAELGYLANPVSTHIQSAEMHNQAINSMALVSGRATITSLEVLSLLISSYLYAICQALDLRALQHELYEGLDAIVKEEIIAAFSPFLDDYEITRFTAISCHIVRDAMDSTSTMDAKDRMTSVAASLTTPLVDFLTGEAFSDVVSAGQALTTIPAFRARIAARGYELLDELRRAYLSGGRGLAPASRFLNKTRPVYEFVRLTLGIKMHGAENYNDFENGVGVDDVTTGQNVSLIHEAIRDGKLQPIIVDLF</sequence>
<comment type="function">
    <text evidence="1 3">Catalyzes the non-oxidative deamination of L-phenylalanine to form trans-cinnamic acid and a free ammonium ion (PubMed:31655558). Facilitates the commitment step in phenylpropanoid pathways that produce secondary metabolites such as lignins, coumarins and flavonoids (By similarity).</text>
</comment>
<comment type="catalytic activity">
    <reaction evidence="3">
        <text>L-phenylalanine = (E)-cinnamate + NH4(+)</text>
        <dbReference type="Rhea" id="RHEA:21384"/>
        <dbReference type="ChEBI" id="CHEBI:15669"/>
        <dbReference type="ChEBI" id="CHEBI:28938"/>
        <dbReference type="ChEBI" id="CHEBI:58095"/>
        <dbReference type="EC" id="4.3.1.24"/>
    </reaction>
</comment>
<comment type="pathway">
    <text evidence="5">Phenylpropanoid metabolism; trans-cinnamate biosynthesis; trans-cinnamate from L-phenylalanine: step 1/1.</text>
</comment>
<comment type="subunit">
    <text evidence="1">Homotetramer.</text>
</comment>
<comment type="subcellular location">
    <subcellularLocation>
        <location evidence="5">Cytoplasm</location>
    </subcellularLocation>
</comment>
<comment type="developmental stage">
    <text evidence="3">Expression is higher in fruiting bodies and spores than in primordia, and very low in mycelia (PubMed:31655558). In the fruiting body, present in the cap, gill, pileipellis but not in the stipe (PubMed:31655558).</text>
</comment>
<comment type="induction">
    <text evidence="3">Induced by thermal stress.</text>
</comment>
<comment type="PTM">
    <text evidence="2">Contains an active site 4-methylidene-imidazol-5-one (MIO), which is formed autocatalytically by cyclization and dehydration of residues Ala-Ser-Gly.</text>
</comment>
<comment type="disruption phenotype">
    <text evidence="3">RNAi-mediated knockdown results in delayed primordium formation.</text>
</comment>
<comment type="similarity">
    <text evidence="5">Belongs to the PAL/histidase family.</text>
</comment>
<keyword id="KW-0963">Cytoplasm</keyword>
<keyword id="KW-0456">Lyase</keyword>
<keyword id="KW-0585">Phenylalanine catabolism</keyword>
<keyword id="KW-0587">Phenylpropanoid metabolism</keyword>
<proteinExistence type="evidence at protein level"/>
<accession>A0A4Y6HUI7</accession>